<protein>
    <recommendedName>
        <fullName evidence="1">Peptidyl-tRNA hydrolase</fullName>
        <shortName evidence="1">Pth</shortName>
        <ecNumber evidence="1">3.1.1.29</ecNumber>
    </recommendedName>
</protein>
<evidence type="ECO:0000255" key="1">
    <source>
        <dbReference type="HAMAP-Rule" id="MF_00083"/>
    </source>
</evidence>
<evidence type="ECO:0000305" key="2"/>
<keyword id="KW-0963">Cytoplasm</keyword>
<keyword id="KW-0378">Hydrolase</keyword>
<keyword id="KW-0694">RNA-binding</keyword>
<keyword id="KW-0820">tRNA-binding</keyword>
<feature type="chain" id="PRO_0000264139" description="Peptidyl-tRNA hydrolase">
    <location>
        <begin position="1"/>
        <end position="196"/>
    </location>
</feature>
<feature type="active site" description="Proton acceptor" evidence="1">
    <location>
        <position position="22"/>
    </location>
</feature>
<feature type="binding site" evidence="1">
    <location>
        <position position="17"/>
    </location>
    <ligand>
        <name>tRNA</name>
        <dbReference type="ChEBI" id="CHEBI:17843"/>
    </ligand>
</feature>
<feature type="binding site" evidence="1">
    <location>
        <position position="68"/>
    </location>
    <ligand>
        <name>tRNA</name>
        <dbReference type="ChEBI" id="CHEBI:17843"/>
    </ligand>
</feature>
<feature type="binding site" evidence="1">
    <location>
        <position position="70"/>
    </location>
    <ligand>
        <name>tRNA</name>
        <dbReference type="ChEBI" id="CHEBI:17843"/>
    </ligand>
</feature>
<feature type="binding site" evidence="1">
    <location>
        <position position="116"/>
    </location>
    <ligand>
        <name>tRNA</name>
        <dbReference type="ChEBI" id="CHEBI:17843"/>
    </ligand>
</feature>
<feature type="site" description="Discriminates between blocked and unblocked aminoacyl-tRNA" evidence="1">
    <location>
        <position position="12"/>
    </location>
</feature>
<feature type="site" description="Stabilizes the basic form of H active site to accept a proton" evidence="1">
    <location>
        <position position="95"/>
    </location>
</feature>
<gene>
    <name evidence="1" type="primary">pth</name>
    <name type="ordered locus">YPA_1394</name>
</gene>
<accession>Q1C861</accession>
<proteinExistence type="inferred from homology"/>
<organism>
    <name type="scientific">Yersinia pestis bv. Antiqua (strain Antiqua)</name>
    <dbReference type="NCBI Taxonomy" id="360102"/>
    <lineage>
        <taxon>Bacteria</taxon>
        <taxon>Pseudomonadati</taxon>
        <taxon>Pseudomonadota</taxon>
        <taxon>Gammaproteobacteria</taxon>
        <taxon>Enterobacterales</taxon>
        <taxon>Yersiniaceae</taxon>
        <taxon>Yersinia</taxon>
    </lineage>
</organism>
<sequence length="196" mass="21271">MSSIKLIVGLANPGAEYAQTRHNAGAWYVDLLAERHNQSLKEESKFFGYTARLNLAGQDIRLLVPATFMNLSGKAVAAMASFYRILPEEILVAHDELDILPGMAKLKLGGGNGGHNGLKDIQNKLGNNPNFYRLRIGIGHPGDKSKVTGFVLGKPPASEQTLIDDAIDESIRCTEVLLNEGMTKAMNRLHAFKASA</sequence>
<comment type="function">
    <text evidence="1">Hydrolyzes ribosome-free peptidyl-tRNAs (with 1 or more amino acids incorporated), which drop off the ribosome during protein synthesis, or as a result of ribosome stalling.</text>
</comment>
<comment type="function">
    <text evidence="1">Catalyzes the release of premature peptidyl moieties from peptidyl-tRNA molecules trapped in stalled 50S ribosomal subunits, and thus maintains levels of free tRNAs and 50S ribosomes.</text>
</comment>
<comment type="catalytic activity">
    <reaction evidence="1">
        <text>an N-acyl-L-alpha-aminoacyl-tRNA + H2O = an N-acyl-L-amino acid + a tRNA + H(+)</text>
        <dbReference type="Rhea" id="RHEA:54448"/>
        <dbReference type="Rhea" id="RHEA-COMP:10123"/>
        <dbReference type="Rhea" id="RHEA-COMP:13883"/>
        <dbReference type="ChEBI" id="CHEBI:15377"/>
        <dbReference type="ChEBI" id="CHEBI:15378"/>
        <dbReference type="ChEBI" id="CHEBI:59874"/>
        <dbReference type="ChEBI" id="CHEBI:78442"/>
        <dbReference type="ChEBI" id="CHEBI:138191"/>
        <dbReference type="EC" id="3.1.1.29"/>
    </reaction>
</comment>
<comment type="subunit">
    <text evidence="1">Monomer.</text>
</comment>
<comment type="subcellular location">
    <subcellularLocation>
        <location evidence="1">Cytoplasm</location>
    </subcellularLocation>
</comment>
<comment type="similarity">
    <text evidence="1">Belongs to the PTH family.</text>
</comment>
<comment type="sequence caution" evidence="2">
    <conflict type="erroneous initiation">
        <sequence resource="EMBL-CDS" id="ABG13361"/>
    </conflict>
    <text>Extended N-terminus.</text>
</comment>
<reference key="1">
    <citation type="journal article" date="2006" name="J. Bacteriol.">
        <title>Complete genome sequence of Yersinia pestis strains Antiqua and Nepal516: evidence of gene reduction in an emerging pathogen.</title>
        <authorList>
            <person name="Chain P.S.G."/>
            <person name="Hu P."/>
            <person name="Malfatti S.A."/>
            <person name="Radnedge L."/>
            <person name="Larimer F."/>
            <person name="Vergez L.M."/>
            <person name="Worsham P."/>
            <person name="Chu M.C."/>
            <person name="Andersen G.L."/>
        </authorList>
    </citation>
    <scope>NUCLEOTIDE SEQUENCE [LARGE SCALE GENOMIC DNA]</scope>
    <source>
        <strain>Antiqua</strain>
    </source>
</reference>
<dbReference type="EC" id="3.1.1.29" evidence="1"/>
<dbReference type="EMBL" id="CP000308">
    <property type="protein sequence ID" value="ABG13361.1"/>
    <property type="status" value="ALT_INIT"/>
    <property type="molecule type" value="Genomic_DNA"/>
</dbReference>
<dbReference type="RefSeq" id="WP_002218168.1">
    <property type="nucleotide sequence ID" value="NZ_CP009906.1"/>
</dbReference>
<dbReference type="SMR" id="Q1C861"/>
<dbReference type="GeneID" id="96665494"/>
<dbReference type="KEGG" id="ypa:YPA_1394"/>
<dbReference type="Proteomes" id="UP000001971">
    <property type="component" value="Chromosome"/>
</dbReference>
<dbReference type="GO" id="GO:0005737">
    <property type="term" value="C:cytoplasm"/>
    <property type="evidence" value="ECO:0007669"/>
    <property type="project" value="UniProtKB-SubCell"/>
</dbReference>
<dbReference type="GO" id="GO:0004045">
    <property type="term" value="F:peptidyl-tRNA hydrolase activity"/>
    <property type="evidence" value="ECO:0007669"/>
    <property type="project" value="UniProtKB-UniRule"/>
</dbReference>
<dbReference type="GO" id="GO:0000049">
    <property type="term" value="F:tRNA binding"/>
    <property type="evidence" value="ECO:0007669"/>
    <property type="project" value="UniProtKB-UniRule"/>
</dbReference>
<dbReference type="GO" id="GO:0006515">
    <property type="term" value="P:protein quality control for misfolded or incompletely synthesized proteins"/>
    <property type="evidence" value="ECO:0007669"/>
    <property type="project" value="UniProtKB-UniRule"/>
</dbReference>
<dbReference type="GO" id="GO:0072344">
    <property type="term" value="P:rescue of stalled ribosome"/>
    <property type="evidence" value="ECO:0007669"/>
    <property type="project" value="UniProtKB-UniRule"/>
</dbReference>
<dbReference type="CDD" id="cd00462">
    <property type="entry name" value="PTH"/>
    <property type="match status" value="1"/>
</dbReference>
<dbReference type="FunFam" id="3.40.50.1470:FF:000001">
    <property type="entry name" value="Peptidyl-tRNA hydrolase"/>
    <property type="match status" value="1"/>
</dbReference>
<dbReference type="Gene3D" id="3.40.50.1470">
    <property type="entry name" value="Peptidyl-tRNA hydrolase"/>
    <property type="match status" value="1"/>
</dbReference>
<dbReference type="HAMAP" id="MF_00083">
    <property type="entry name" value="Pept_tRNA_hydro_bact"/>
    <property type="match status" value="1"/>
</dbReference>
<dbReference type="InterPro" id="IPR001328">
    <property type="entry name" value="Pept_tRNA_hydro"/>
</dbReference>
<dbReference type="InterPro" id="IPR018171">
    <property type="entry name" value="Pept_tRNA_hydro_CS"/>
</dbReference>
<dbReference type="InterPro" id="IPR036416">
    <property type="entry name" value="Pept_tRNA_hydro_sf"/>
</dbReference>
<dbReference type="NCBIfam" id="TIGR00447">
    <property type="entry name" value="pth"/>
    <property type="match status" value="1"/>
</dbReference>
<dbReference type="PANTHER" id="PTHR17224">
    <property type="entry name" value="PEPTIDYL-TRNA HYDROLASE"/>
    <property type="match status" value="1"/>
</dbReference>
<dbReference type="PANTHER" id="PTHR17224:SF1">
    <property type="entry name" value="PEPTIDYL-TRNA HYDROLASE"/>
    <property type="match status" value="1"/>
</dbReference>
<dbReference type="Pfam" id="PF01195">
    <property type="entry name" value="Pept_tRNA_hydro"/>
    <property type="match status" value="1"/>
</dbReference>
<dbReference type="SUPFAM" id="SSF53178">
    <property type="entry name" value="Peptidyl-tRNA hydrolase-like"/>
    <property type="match status" value="1"/>
</dbReference>
<dbReference type="PROSITE" id="PS01195">
    <property type="entry name" value="PEPT_TRNA_HYDROL_1"/>
    <property type="match status" value="1"/>
</dbReference>
<dbReference type="PROSITE" id="PS01196">
    <property type="entry name" value="PEPT_TRNA_HYDROL_2"/>
    <property type="match status" value="1"/>
</dbReference>
<name>PTH_YERPA</name>